<dbReference type="EMBL" id="AE016877">
    <property type="protein sequence ID" value="AAP10977.1"/>
    <property type="molecule type" value="Genomic_DNA"/>
</dbReference>
<dbReference type="RefSeq" id="NP_833776.1">
    <property type="nucleotide sequence ID" value="NC_004722.1"/>
</dbReference>
<dbReference type="RefSeq" id="WP_001199753.1">
    <property type="nucleotide sequence ID" value="NZ_CP138336.1"/>
</dbReference>
<dbReference type="SMR" id="Q812U6"/>
<dbReference type="STRING" id="226900.BC_4058"/>
<dbReference type="KEGG" id="bce:BC4058"/>
<dbReference type="PATRIC" id="fig|226900.8.peg.4189"/>
<dbReference type="HOGENOM" id="CLU_038686_3_1_9"/>
<dbReference type="OrthoDB" id="9811016at2"/>
<dbReference type="Proteomes" id="UP000001417">
    <property type="component" value="Chromosome"/>
</dbReference>
<dbReference type="GO" id="GO:0005737">
    <property type="term" value="C:cytoplasm"/>
    <property type="evidence" value="ECO:0007669"/>
    <property type="project" value="UniProtKB-SubCell"/>
</dbReference>
<dbReference type="GO" id="GO:0051301">
    <property type="term" value="P:cell division"/>
    <property type="evidence" value="ECO:0007669"/>
    <property type="project" value="UniProtKB-KW"/>
</dbReference>
<dbReference type="GO" id="GO:0007059">
    <property type="term" value="P:chromosome segregation"/>
    <property type="evidence" value="ECO:0007669"/>
    <property type="project" value="UniProtKB-UniRule"/>
</dbReference>
<dbReference type="GO" id="GO:0006260">
    <property type="term" value="P:DNA replication"/>
    <property type="evidence" value="ECO:0007669"/>
    <property type="project" value="UniProtKB-UniRule"/>
</dbReference>
<dbReference type="Gene3D" id="6.10.250.2410">
    <property type="match status" value="1"/>
</dbReference>
<dbReference type="Gene3D" id="1.10.10.580">
    <property type="entry name" value="Structural maintenance of chromosome 1. Chain E"/>
    <property type="match status" value="1"/>
</dbReference>
<dbReference type="HAMAP" id="MF_01805">
    <property type="entry name" value="ScpA"/>
    <property type="match status" value="1"/>
</dbReference>
<dbReference type="InterPro" id="IPR003768">
    <property type="entry name" value="ScpA"/>
</dbReference>
<dbReference type="InterPro" id="IPR023093">
    <property type="entry name" value="ScpA-like_C"/>
</dbReference>
<dbReference type="NCBIfam" id="NF000992">
    <property type="entry name" value="PRK00104.1-1"/>
    <property type="match status" value="1"/>
</dbReference>
<dbReference type="NCBIfam" id="NF000995">
    <property type="entry name" value="PRK00104.1-4"/>
    <property type="match status" value="1"/>
</dbReference>
<dbReference type="PANTHER" id="PTHR33969">
    <property type="entry name" value="SEGREGATION AND CONDENSATION PROTEIN A"/>
    <property type="match status" value="1"/>
</dbReference>
<dbReference type="PANTHER" id="PTHR33969:SF2">
    <property type="entry name" value="SEGREGATION AND CONDENSATION PROTEIN A"/>
    <property type="match status" value="1"/>
</dbReference>
<dbReference type="Pfam" id="PF02616">
    <property type="entry name" value="SMC_ScpA"/>
    <property type="match status" value="1"/>
</dbReference>
<sequence length="247" mass="29241">MQYNFKVEAFEGPLDLLLHLIHRYEIDIYNIPVADITEQYLSYVHTMKELQLDVASEYLVMAATLLQIKSKMLLPKHEEDVLDNGDDFIDDPRQELMERLIEYKKYKQVATELKEREQERAQLYTRPPIDFTSLQQEEETSLPLDVTLYDMLAAFQKLMRRKKAKKPVTTRITRQEIPIEQRMTDILKQLKIKGGRQSFYDLFVDDEREIMVVTFLAVLELMKNQQIIIEQEHNFDEIFVSSSNKSA</sequence>
<accession>Q812U6</accession>
<evidence type="ECO:0000255" key="1">
    <source>
        <dbReference type="HAMAP-Rule" id="MF_01805"/>
    </source>
</evidence>
<proteinExistence type="inferred from homology"/>
<comment type="function">
    <text evidence="1">Participates in chromosomal partition during cell division. May act via the formation of a condensin-like complex containing Smc and ScpB that pull DNA away from mid-cell into both cell halves.</text>
</comment>
<comment type="subunit">
    <text evidence="1">Component of a cohesin-like complex composed of ScpA, ScpB and the Smc homodimer, in which ScpA and ScpB bind to the head domain of Smc. The presence of the three proteins is required for the association of the complex with DNA.</text>
</comment>
<comment type="subcellular location">
    <subcellularLocation>
        <location evidence="1">Cytoplasm</location>
    </subcellularLocation>
    <text evidence="1">Associated with two foci at the outer edges of the nucleoid region in young cells, and at four foci within both cell halves in older cells.</text>
</comment>
<comment type="similarity">
    <text evidence="1">Belongs to the ScpA family.</text>
</comment>
<organism>
    <name type="scientific">Bacillus cereus (strain ATCC 14579 / DSM 31 / CCUG 7414 / JCM 2152 / NBRC 15305 / NCIMB 9373 / NCTC 2599 / NRRL B-3711)</name>
    <dbReference type="NCBI Taxonomy" id="226900"/>
    <lineage>
        <taxon>Bacteria</taxon>
        <taxon>Bacillati</taxon>
        <taxon>Bacillota</taxon>
        <taxon>Bacilli</taxon>
        <taxon>Bacillales</taxon>
        <taxon>Bacillaceae</taxon>
        <taxon>Bacillus</taxon>
        <taxon>Bacillus cereus group</taxon>
    </lineage>
</organism>
<gene>
    <name evidence="1" type="primary">scpA</name>
    <name type="ordered locus">BC_4058</name>
</gene>
<keyword id="KW-0131">Cell cycle</keyword>
<keyword id="KW-0132">Cell division</keyword>
<keyword id="KW-0159">Chromosome partition</keyword>
<keyword id="KW-0963">Cytoplasm</keyword>
<keyword id="KW-1185">Reference proteome</keyword>
<feature type="chain" id="PRO_0000211077" description="Segregation and condensation protein A">
    <location>
        <begin position="1"/>
        <end position="247"/>
    </location>
</feature>
<protein>
    <recommendedName>
        <fullName evidence="1">Segregation and condensation protein A</fullName>
    </recommendedName>
</protein>
<reference key="1">
    <citation type="journal article" date="2003" name="Nature">
        <title>Genome sequence of Bacillus cereus and comparative analysis with Bacillus anthracis.</title>
        <authorList>
            <person name="Ivanova N."/>
            <person name="Sorokin A."/>
            <person name="Anderson I."/>
            <person name="Galleron N."/>
            <person name="Candelon B."/>
            <person name="Kapatral V."/>
            <person name="Bhattacharyya A."/>
            <person name="Reznik G."/>
            <person name="Mikhailova N."/>
            <person name="Lapidus A."/>
            <person name="Chu L."/>
            <person name="Mazur M."/>
            <person name="Goltsman E."/>
            <person name="Larsen N."/>
            <person name="D'Souza M."/>
            <person name="Walunas T."/>
            <person name="Grechkin Y."/>
            <person name="Pusch G."/>
            <person name="Haselkorn R."/>
            <person name="Fonstein M."/>
            <person name="Ehrlich S.D."/>
            <person name="Overbeek R."/>
            <person name="Kyrpides N.C."/>
        </authorList>
    </citation>
    <scope>NUCLEOTIDE SEQUENCE [LARGE SCALE GENOMIC DNA]</scope>
    <source>
        <strain>ATCC 14579 / DSM 31 / CCUG 7414 / JCM 2152 / NBRC 15305 / NCIMB 9373 / NCTC 2599 / NRRL B-3711</strain>
    </source>
</reference>
<name>SCPA_BACCR</name>